<protein>
    <recommendedName>
        <fullName evidence="1">S-adenosylmethionine:tRNA ribosyltransferase-isomerase</fullName>
        <ecNumber evidence="1">2.4.99.17</ecNumber>
    </recommendedName>
    <alternativeName>
        <fullName evidence="1">Queuosine biosynthesis protein QueA</fullName>
    </alternativeName>
</protein>
<organism>
    <name type="scientific">Edwardsiella ictaluri (strain 93-146)</name>
    <dbReference type="NCBI Taxonomy" id="634503"/>
    <lineage>
        <taxon>Bacteria</taxon>
        <taxon>Pseudomonadati</taxon>
        <taxon>Pseudomonadota</taxon>
        <taxon>Gammaproteobacteria</taxon>
        <taxon>Enterobacterales</taxon>
        <taxon>Hafniaceae</taxon>
        <taxon>Edwardsiella</taxon>
    </lineage>
</organism>
<feature type="chain" id="PRO_1000202952" description="S-adenosylmethionine:tRNA ribosyltransferase-isomerase">
    <location>
        <begin position="1"/>
        <end position="357"/>
    </location>
</feature>
<comment type="function">
    <text evidence="1">Transfers and isomerizes the ribose moiety from AdoMet to the 7-aminomethyl group of 7-deazaguanine (preQ1-tRNA) to give epoxyqueuosine (oQ-tRNA).</text>
</comment>
<comment type="catalytic activity">
    <reaction evidence="1">
        <text>7-aminomethyl-7-carbaguanosine(34) in tRNA + S-adenosyl-L-methionine = epoxyqueuosine(34) in tRNA + adenine + L-methionine + 2 H(+)</text>
        <dbReference type="Rhea" id="RHEA:32155"/>
        <dbReference type="Rhea" id="RHEA-COMP:10342"/>
        <dbReference type="Rhea" id="RHEA-COMP:18582"/>
        <dbReference type="ChEBI" id="CHEBI:15378"/>
        <dbReference type="ChEBI" id="CHEBI:16708"/>
        <dbReference type="ChEBI" id="CHEBI:57844"/>
        <dbReference type="ChEBI" id="CHEBI:59789"/>
        <dbReference type="ChEBI" id="CHEBI:82833"/>
        <dbReference type="ChEBI" id="CHEBI:194443"/>
        <dbReference type="EC" id="2.4.99.17"/>
    </reaction>
</comment>
<comment type="pathway">
    <text evidence="1">tRNA modification; tRNA-queuosine biosynthesis.</text>
</comment>
<comment type="subunit">
    <text evidence="1">Monomer.</text>
</comment>
<comment type="subcellular location">
    <subcellularLocation>
        <location evidence="1">Cytoplasm</location>
    </subcellularLocation>
</comment>
<comment type="similarity">
    <text evidence="1">Belongs to the QueA family.</text>
</comment>
<evidence type="ECO:0000255" key="1">
    <source>
        <dbReference type="HAMAP-Rule" id="MF_00113"/>
    </source>
</evidence>
<name>QUEA_EDWI9</name>
<accession>C5BCF6</accession>
<proteinExistence type="inferred from homology"/>
<dbReference type="EC" id="2.4.99.17" evidence="1"/>
<dbReference type="EMBL" id="CP001600">
    <property type="protein sequence ID" value="ACR68250.1"/>
    <property type="molecule type" value="Genomic_DNA"/>
</dbReference>
<dbReference type="RefSeq" id="WP_015870431.1">
    <property type="nucleotide sequence ID" value="NZ_CP169062.1"/>
</dbReference>
<dbReference type="SMR" id="C5BCF6"/>
<dbReference type="STRING" id="67780.B6E78_15615"/>
<dbReference type="GeneID" id="69538074"/>
<dbReference type="KEGG" id="eic:NT01EI_1038"/>
<dbReference type="PATRIC" id="fig|634503.3.peg.940"/>
<dbReference type="HOGENOM" id="CLU_039110_1_0_6"/>
<dbReference type="OrthoDB" id="9805933at2"/>
<dbReference type="UniPathway" id="UPA00392"/>
<dbReference type="Proteomes" id="UP000001485">
    <property type="component" value="Chromosome"/>
</dbReference>
<dbReference type="GO" id="GO:0005737">
    <property type="term" value="C:cytoplasm"/>
    <property type="evidence" value="ECO:0007669"/>
    <property type="project" value="UniProtKB-SubCell"/>
</dbReference>
<dbReference type="GO" id="GO:0051075">
    <property type="term" value="F:S-adenosylmethionine:tRNA ribosyltransferase-isomerase activity"/>
    <property type="evidence" value="ECO:0007669"/>
    <property type="project" value="UniProtKB-EC"/>
</dbReference>
<dbReference type="GO" id="GO:0008616">
    <property type="term" value="P:queuosine biosynthetic process"/>
    <property type="evidence" value="ECO:0007669"/>
    <property type="project" value="UniProtKB-UniRule"/>
</dbReference>
<dbReference type="GO" id="GO:0002099">
    <property type="term" value="P:tRNA wobble guanine modification"/>
    <property type="evidence" value="ECO:0007669"/>
    <property type="project" value="TreeGrafter"/>
</dbReference>
<dbReference type="FunFam" id="2.40.10.240:FF:000001">
    <property type="entry name" value="S-adenosylmethionine:tRNA ribosyltransferase-isomerase"/>
    <property type="match status" value="1"/>
</dbReference>
<dbReference type="FunFam" id="3.40.1780.10:FF:000001">
    <property type="entry name" value="S-adenosylmethionine:tRNA ribosyltransferase-isomerase"/>
    <property type="match status" value="1"/>
</dbReference>
<dbReference type="Gene3D" id="2.40.10.240">
    <property type="entry name" value="QueA-like"/>
    <property type="match status" value="1"/>
</dbReference>
<dbReference type="Gene3D" id="3.40.1780.10">
    <property type="entry name" value="QueA-like"/>
    <property type="match status" value="1"/>
</dbReference>
<dbReference type="HAMAP" id="MF_00113">
    <property type="entry name" value="QueA"/>
    <property type="match status" value="1"/>
</dbReference>
<dbReference type="InterPro" id="IPR003699">
    <property type="entry name" value="QueA"/>
</dbReference>
<dbReference type="InterPro" id="IPR042118">
    <property type="entry name" value="QueA_dom1"/>
</dbReference>
<dbReference type="InterPro" id="IPR042119">
    <property type="entry name" value="QueA_dom2"/>
</dbReference>
<dbReference type="InterPro" id="IPR036100">
    <property type="entry name" value="QueA_sf"/>
</dbReference>
<dbReference type="NCBIfam" id="NF001140">
    <property type="entry name" value="PRK00147.1"/>
    <property type="match status" value="1"/>
</dbReference>
<dbReference type="NCBIfam" id="TIGR00113">
    <property type="entry name" value="queA"/>
    <property type="match status" value="1"/>
</dbReference>
<dbReference type="PANTHER" id="PTHR30307">
    <property type="entry name" value="S-ADENOSYLMETHIONINE:TRNA RIBOSYLTRANSFERASE-ISOMERASE"/>
    <property type="match status" value="1"/>
</dbReference>
<dbReference type="PANTHER" id="PTHR30307:SF0">
    <property type="entry name" value="S-ADENOSYLMETHIONINE:TRNA RIBOSYLTRANSFERASE-ISOMERASE"/>
    <property type="match status" value="1"/>
</dbReference>
<dbReference type="Pfam" id="PF02547">
    <property type="entry name" value="Queuosine_synth"/>
    <property type="match status" value="1"/>
</dbReference>
<dbReference type="SUPFAM" id="SSF111337">
    <property type="entry name" value="QueA-like"/>
    <property type="match status" value="1"/>
</dbReference>
<reference key="1">
    <citation type="submission" date="2009-03" db="EMBL/GenBank/DDBJ databases">
        <title>Complete genome sequence of Edwardsiella ictaluri 93-146.</title>
        <authorList>
            <person name="Williams M.L."/>
            <person name="Gillaspy A.F."/>
            <person name="Dyer D.W."/>
            <person name="Thune R.L."/>
            <person name="Waldbieser G.C."/>
            <person name="Schuster S.C."/>
            <person name="Gipson J."/>
            <person name="Zaitshik J."/>
            <person name="Landry C."/>
            <person name="Lawrence M.L."/>
        </authorList>
    </citation>
    <scope>NUCLEOTIDE SEQUENCE [LARGE SCALE GENOMIC DNA]</scope>
    <source>
        <strain>93-146</strain>
    </source>
</reference>
<keyword id="KW-0963">Cytoplasm</keyword>
<keyword id="KW-0671">Queuosine biosynthesis</keyword>
<keyword id="KW-0949">S-adenosyl-L-methionine</keyword>
<keyword id="KW-0808">Transferase</keyword>
<gene>
    <name evidence="1" type="primary">queA</name>
    <name type="ordered locus">NT01EI_1038</name>
</gene>
<sequence>MRVSDFTFELPDELIARYPQEQRSGCRLLSLDGPTGARQHGVFTDIVDKLNPGDLLVFNNTRVIPARLFGRKASGGKVEVLVERVLDRTRVLAHVRASKAPKPGAGLLLGDNEDIRATMLARHDALFELGFDDPRDVLTILNAAGHMPLPPYIDRPDEEADRELYQTVYSSRPGAVAAPTAGLHFDQPLLDRLRDKGVEMAFVTLHVGAGTFQPVRVESIEDHVMHSEYAEVPQEVVDAVLACKARGNRVIAVGTTSVRSLESAAAANKQALIAPFFDDTQIFIYPGYHYQVIDALITNFHLPESTLIMLVSAFAGYRHTLDAYRDAVVQQYRFFSYGDAMYITRNPQAEQEQVVSA</sequence>